<sequence length="385" mass="40274">MSQREWIEKDYYKELGVSSTASQDEIKKAYRKLARDLHPDANPGDSKAEERFKAVSEAHAVLSDPAKRKEYDETRRLFAGGGYPRGGFGPGGAGGFSQGFDIGDIFGGTAAGDGGLGDILGGLFNRGGTRTTSRPRRGADVETETTLGFREAAQGVTVPLRMTSPSPCTTCHGSGAKPGTSPRVCPICNGTGVVSRNQGAFGFSEPCDGCRGTGSIIDDPCVDCHGSGIQNRTRTITVRIPPGVSDGQRIRLAGQGEAGLRGAPSGDLYVTVHVSQDKVFGRNGDDLTLVLPVSYAELVLGTTVSVPTLDGRVGVKVPPGTADGRTLRVRGRGVPKRGGGAGDLLVTVKVAVPQKLDDDALEALERYREAEKASGFDPRAGWAGA</sequence>
<reference key="1">
    <citation type="journal article" date="2004" name="Proc. Natl. Acad. Sci. U.S.A.">
        <title>The complete genomic sequence of Nocardia farcinica IFM 10152.</title>
        <authorList>
            <person name="Ishikawa J."/>
            <person name="Yamashita A."/>
            <person name="Mikami Y."/>
            <person name="Hoshino Y."/>
            <person name="Kurita H."/>
            <person name="Hotta K."/>
            <person name="Shiba T."/>
            <person name="Hattori M."/>
        </authorList>
    </citation>
    <scope>NUCLEOTIDE SEQUENCE [LARGE SCALE GENOMIC DNA]</scope>
    <source>
        <strain>IFM 10152</strain>
    </source>
</reference>
<proteinExistence type="inferred from homology"/>
<organism>
    <name type="scientific">Nocardia farcinica (strain IFM 10152)</name>
    <dbReference type="NCBI Taxonomy" id="247156"/>
    <lineage>
        <taxon>Bacteria</taxon>
        <taxon>Bacillati</taxon>
        <taxon>Actinomycetota</taxon>
        <taxon>Actinomycetes</taxon>
        <taxon>Mycobacteriales</taxon>
        <taxon>Nocardiaceae</taxon>
        <taxon>Nocardia</taxon>
    </lineage>
</organism>
<dbReference type="EMBL" id="AP006618">
    <property type="protein sequence ID" value="BAD60259.1"/>
    <property type="molecule type" value="Genomic_DNA"/>
</dbReference>
<dbReference type="SMR" id="Q5YNI2"/>
<dbReference type="STRING" id="247156.NFA_54070"/>
<dbReference type="GeneID" id="61135977"/>
<dbReference type="KEGG" id="nfa:NFA_54070"/>
<dbReference type="eggNOG" id="COG0484">
    <property type="taxonomic scope" value="Bacteria"/>
</dbReference>
<dbReference type="HOGENOM" id="CLU_017633_0_6_11"/>
<dbReference type="OrthoDB" id="9779889at2"/>
<dbReference type="Proteomes" id="UP000006820">
    <property type="component" value="Chromosome"/>
</dbReference>
<dbReference type="GO" id="GO:0005737">
    <property type="term" value="C:cytoplasm"/>
    <property type="evidence" value="ECO:0007669"/>
    <property type="project" value="UniProtKB-SubCell"/>
</dbReference>
<dbReference type="GO" id="GO:0005524">
    <property type="term" value="F:ATP binding"/>
    <property type="evidence" value="ECO:0007669"/>
    <property type="project" value="InterPro"/>
</dbReference>
<dbReference type="GO" id="GO:0031072">
    <property type="term" value="F:heat shock protein binding"/>
    <property type="evidence" value="ECO:0007669"/>
    <property type="project" value="InterPro"/>
</dbReference>
<dbReference type="GO" id="GO:0051082">
    <property type="term" value="F:unfolded protein binding"/>
    <property type="evidence" value="ECO:0007669"/>
    <property type="project" value="UniProtKB-UniRule"/>
</dbReference>
<dbReference type="GO" id="GO:0008270">
    <property type="term" value="F:zinc ion binding"/>
    <property type="evidence" value="ECO:0007669"/>
    <property type="project" value="UniProtKB-UniRule"/>
</dbReference>
<dbReference type="GO" id="GO:0051085">
    <property type="term" value="P:chaperone cofactor-dependent protein refolding"/>
    <property type="evidence" value="ECO:0007669"/>
    <property type="project" value="TreeGrafter"/>
</dbReference>
<dbReference type="GO" id="GO:0006260">
    <property type="term" value="P:DNA replication"/>
    <property type="evidence" value="ECO:0007669"/>
    <property type="project" value="UniProtKB-KW"/>
</dbReference>
<dbReference type="GO" id="GO:0042026">
    <property type="term" value="P:protein refolding"/>
    <property type="evidence" value="ECO:0007669"/>
    <property type="project" value="TreeGrafter"/>
</dbReference>
<dbReference type="GO" id="GO:0009408">
    <property type="term" value="P:response to heat"/>
    <property type="evidence" value="ECO:0007669"/>
    <property type="project" value="InterPro"/>
</dbReference>
<dbReference type="CDD" id="cd06257">
    <property type="entry name" value="DnaJ"/>
    <property type="match status" value="1"/>
</dbReference>
<dbReference type="CDD" id="cd10747">
    <property type="entry name" value="DnaJ_C"/>
    <property type="match status" value="1"/>
</dbReference>
<dbReference type="CDD" id="cd10719">
    <property type="entry name" value="DnaJ_zf"/>
    <property type="match status" value="1"/>
</dbReference>
<dbReference type="FunFam" id="2.60.260.20:FF:000021">
    <property type="entry name" value="Chaperone protein DnaJ"/>
    <property type="match status" value="1"/>
</dbReference>
<dbReference type="FunFam" id="1.10.287.110:FF:000045">
    <property type="entry name" value="Molecular chaperone DnaJ"/>
    <property type="match status" value="1"/>
</dbReference>
<dbReference type="FunFam" id="2.10.230.10:FF:000002">
    <property type="entry name" value="Molecular chaperone DnaJ"/>
    <property type="match status" value="1"/>
</dbReference>
<dbReference type="Gene3D" id="1.10.287.110">
    <property type="entry name" value="DnaJ domain"/>
    <property type="match status" value="1"/>
</dbReference>
<dbReference type="Gene3D" id="2.10.230.10">
    <property type="entry name" value="Heat shock protein DnaJ, cysteine-rich domain"/>
    <property type="match status" value="1"/>
</dbReference>
<dbReference type="Gene3D" id="2.60.260.20">
    <property type="entry name" value="Urease metallochaperone UreE, N-terminal domain"/>
    <property type="match status" value="2"/>
</dbReference>
<dbReference type="HAMAP" id="MF_01152">
    <property type="entry name" value="DnaJ"/>
    <property type="match status" value="1"/>
</dbReference>
<dbReference type="InterPro" id="IPR012724">
    <property type="entry name" value="DnaJ"/>
</dbReference>
<dbReference type="InterPro" id="IPR002939">
    <property type="entry name" value="DnaJ_C"/>
</dbReference>
<dbReference type="InterPro" id="IPR001623">
    <property type="entry name" value="DnaJ_domain"/>
</dbReference>
<dbReference type="InterPro" id="IPR018253">
    <property type="entry name" value="DnaJ_domain_CS"/>
</dbReference>
<dbReference type="InterPro" id="IPR008971">
    <property type="entry name" value="HSP40/DnaJ_pept-bd"/>
</dbReference>
<dbReference type="InterPro" id="IPR001305">
    <property type="entry name" value="HSP_DnaJ_Cys-rich_dom"/>
</dbReference>
<dbReference type="InterPro" id="IPR036410">
    <property type="entry name" value="HSP_DnaJ_Cys-rich_dom_sf"/>
</dbReference>
<dbReference type="InterPro" id="IPR036869">
    <property type="entry name" value="J_dom_sf"/>
</dbReference>
<dbReference type="NCBIfam" id="TIGR02349">
    <property type="entry name" value="DnaJ_bact"/>
    <property type="match status" value="1"/>
</dbReference>
<dbReference type="NCBIfam" id="NF008035">
    <property type="entry name" value="PRK10767.1"/>
    <property type="match status" value="1"/>
</dbReference>
<dbReference type="NCBIfam" id="NF010872">
    <property type="entry name" value="PRK14279.1"/>
    <property type="match status" value="1"/>
</dbReference>
<dbReference type="PANTHER" id="PTHR43096:SF54">
    <property type="entry name" value="CHAPERONE PROTEIN DNAJ 1"/>
    <property type="match status" value="1"/>
</dbReference>
<dbReference type="PANTHER" id="PTHR43096">
    <property type="entry name" value="DNAJ HOMOLOG 1, MITOCHONDRIAL-RELATED"/>
    <property type="match status" value="1"/>
</dbReference>
<dbReference type="Pfam" id="PF00226">
    <property type="entry name" value="DnaJ"/>
    <property type="match status" value="1"/>
</dbReference>
<dbReference type="Pfam" id="PF01556">
    <property type="entry name" value="DnaJ_C"/>
    <property type="match status" value="1"/>
</dbReference>
<dbReference type="Pfam" id="PF00684">
    <property type="entry name" value="DnaJ_CXXCXGXG"/>
    <property type="match status" value="1"/>
</dbReference>
<dbReference type="PRINTS" id="PR00625">
    <property type="entry name" value="JDOMAIN"/>
</dbReference>
<dbReference type="SMART" id="SM00271">
    <property type="entry name" value="DnaJ"/>
    <property type="match status" value="1"/>
</dbReference>
<dbReference type="SUPFAM" id="SSF46565">
    <property type="entry name" value="Chaperone J-domain"/>
    <property type="match status" value="1"/>
</dbReference>
<dbReference type="SUPFAM" id="SSF57938">
    <property type="entry name" value="DnaJ/Hsp40 cysteine-rich domain"/>
    <property type="match status" value="1"/>
</dbReference>
<dbReference type="SUPFAM" id="SSF49493">
    <property type="entry name" value="HSP40/DnaJ peptide-binding domain"/>
    <property type="match status" value="2"/>
</dbReference>
<dbReference type="PROSITE" id="PS00636">
    <property type="entry name" value="DNAJ_1"/>
    <property type="match status" value="1"/>
</dbReference>
<dbReference type="PROSITE" id="PS50076">
    <property type="entry name" value="DNAJ_2"/>
    <property type="match status" value="1"/>
</dbReference>
<dbReference type="PROSITE" id="PS51188">
    <property type="entry name" value="ZF_CR"/>
    <property type="match status" value="1"/>
</dbReference>
<name>DNAJ2_NOCFA</name>
<comment type="function">
    <text evidence="1">Participates actively in the response to hyperosmotic and heat shock by preventing the aggregation of stress-denatured proteins and by disaggregating proteins, also in an autonomous, DnaK-independent fashion. Unfolded proteins bind initially to DnaJ; upon interaction with the DnaJ-bound protein, DnaK hydrolyzes its bound ATP, resulting in the formation of a stable complex. GrpE releases ADP from DnaK; ATP binding to DnaK triggers the release of the substrate protein, thus completing the reaction cycle. Several rounds of ATP-dependent interactions between DnaJ, DnaK and GrpE are required for fully efficient folding. Also involved, together with DnaK and GrpE, in the DNA replication of plasmids through activation of initiation proteins.</text>
</comment>
<comment type="cofactor">
    <cofactor evidence="1">
        <name>Zn(2+)</name>
        <dbReference type="ChEBI" id="CHEBI:29105"/>
    </cofactor>
    <text evidence="1">Binds 2 Zn(2+) ions per monomer.</text>
</comment>
<comment type="subunit">
    <text evidence="1">Homodimer.</text>
</comment>
<comment type="subcellular location">
    <subcellularLocation>
        <location evidence="1">Cytoplasm</location>
    </subcellularLocation>
</comment>
<comment type="domain">
    <text evidence="1">The J domain is necessary and sufficient to stimulate DnaK ATPase activity. Zinc center 1 plays an important role in the autonomous, DnaK-independent chaperone activity of DnaJ. Zinc center 2 is essential for interaction with DnaK and for DnaJ activity.</text>
</comment>
<comment type="similarity">
    <text evidence="1">Belongs to the DnaJ family.</text>
</comment>
<feature type="chain" id="PRO_0000070843" description="Chaperone protein DnaJ 2">
    <location>
        <begin position="1"/>
        <end position="385"/>
    </location>
</feature>
<feature type="domain" description="J" evidence="1">
    <location>
        <begin position="10"/>
        <end position="75"/>
    </location>
</feature>
<feature type="repeat" description="CXXCXGXG motif">
    <location>
        <begin position="168"/>
        <end position="175"/>
    </location>
</feature>
<feature type="repeat" description="CXXCXGXG motif">
    <location>
        <begin position="185"/>
        <end position="192"/>
    </location>
</feature>
<feature type="repeat" description="CXXCXGXG motif">
    <location>
        <begin position="207"/>
        <end position="214"/>
    </location>
</feature>
<feature type="repeat" description="CXXCXGXG motif">
    <location>
        <begin position="221"/>
        <end position="228"/>
    </location>
</feature>
<feature type="zinc finger region" description="CR-type" evidence="1">
    <location>
        <begin position="155"/>
        <end position="233"/>
    </location>
</feature>
<feature type="binding site" evidence="1">
    <location>
        <position position="168"/>
    </location>
    <ligand>
        <name>Zn(2+)</name>
        <dbReference type="ChEBI" id="CHEBI:29105"/>
        <label>1</label>
    </ligand>
</feature>
<feature type="binding site" evidence="1">
    <location>
        <position position="171"/>
    </location>
    <ligand>
        <name>Zn(2+)</name>
        <dbReference type="ChEBI" id="CHEBI:29105"/>
        <label>1</label>
    </ligand>
</feature>
<feature type="binding site" evidence="1">
    <location>
        <position position="185"/>
    </location>
    <ligand>
        <name>Zn(2+)</name>
        <dbReference type="ChEBI" id="CHEBI:29105"/>
        <label>2</label>
    </ligand>
</feature>
<feature type="binding site" evidence="1">
    <location>
        <position position="188"/>
    </location>
    <ligand>
        <name>Zn(2+)</name>
        <dbReference type="ChEBI" id="CHEBI:29105"/>
        <label>2</label>
    </ligand>
</feature>
<feature type="binding site" evidence="1">
    <location>
        <position position="207"/>
    </location>
    <ligand>
        <name>Zn(2+)</name>
        <dbReference type="ChEBI" id="CHEBI:29105"/>
        <label>2</label>
    </ligand>
</feature>
<feature type="binding site" evidence="1">
    <location>
        <position position="210"/>
    </location>
    <ligand>
        <name>Zn(2+)</name>
        <dbReference type="ChEBI" id="CHEBI:29105"/>
        <label>2</label>
    </ligand>
</feature>
<feature type="binding site" evidence="1">
    <location>
        <position position="221"/>
    </location>
    <ligand>
        <name>Zn(2+)</name>
        <dbReference type="ChEBI" id="CHEBI:29105"/>
        <label>1</label>
    </ligand>
</feature>
<feature type="binding site" evidence="1">
    <location>
        <position position="224"/>
    </location>
    <ligand>
        <name>Zn(2+)</name>
        <dbReference type="ChEBI" id="CHEBI:29105"/>
        <label>1</label>
    </ligand>
</feature>
<gene>
    <name evidence="1" type="primary">dnaJ2</name>
    <name type="ordered locus">NFA_54070</name>
</gene>
<evidence type="ECO:0000255" key="1">
    <source>
        <dbReference type="HAMAP-Rule" id="MF_01152"/>
    </source>
</evidence>
<accession>Q5YNI2</accession>
<protein>
    <recommendedName>
        <fullName evidence="1">Chaperone protein DnaJ 2</fullName>
    </recommendedName>
</protein>
<keyword id="KW-0143">Chaperone</keyword>
<keyword id="KW-0963">Cytoplasm</keyword>
<keyword id="KW-0235">DNA replication</keyword>
<keyword id="KW-0479">Metal-binding</keyword>
<keyword id="KW-1185">Reference proteome</keyword>
<keyword id="KW-0677">Repeat</keyword>
<keyword id="KW-0346">Stress response</keyword>
<keyword id="KW-0862">Zinc</keyword>
<keyword id="KW-0863">Zinc-finger</keyword>